<organism>
    <name type="scientific">Salmonella typhi</name>
    <dbReference type="NCBI Taxonomy" id="90370"/>
    <lineage>
        <taxon>Bacteria</taxon>
        <taxon>Pseudomonadati</taxon>
        <taxon>Pseudomonadota</taxon>
        <taxon>Gammaproteobacteria</taxon>
        <taxon>Enterobacterales</taxon>
        <taxon>Enterobacteriaceae</taxon>
        <taxon>Salmonella</taxon>
    </lineage>
</organism>
<reference key="1">
    <citation type="journal article" date="2001" name="Nature">
        <title>Complete genome sequence of a multiple drug resistant Salmonella enterica serovar Typhi CT18.</title>
        <authorList>
            <person name="Parkhill J."/>
            <person name="Dougan G."/>
            <person name="James K.D."/>
            <person name="Thomson N.R."/>
            <person name="Pickard D."/>
            <person name="Wain J."/>
            <person name="Churcher C.M."/>
            <person name="Mungall K.L."/>
            <person name="Bentley S.D."/>
            <person name="Holden M.T.G."/>
            <person name="Sebaihia M."/>
            <person name="Baker S."/>
            <person name="Basham D."/>
            <person name="Brooks K."/>
            <person name="Chillingworth T."/>
            <person name="Connerton P."/>
            <person name="Cronin A."/>
            <person name="Davis P."/>
            <person name="Davies R.M."/>
            <person name="Dowd L."/>
            <person name="White N."/>
            <person name="Farrar J."/>
            <person name="Feltwell T."/>
            <person name="Hamlin N."/>
            <person name="Haque A."/>
            <person name="Hien T.T."/>
            <person name="Holroyd S."/>
            <person name="Jagels K."/>
            <person name="Krogh A."/>
            <person name="Larsen T.S."/>
            <person name="Leather S."/>
            <person name="Moule S."/>
            <person name="O'Gaora P."/>
            <person name="Parry C."/>
            <person name="Quail M.A."/>
            <person name="Rutherford K.M."/>
            <person name="Simmonds M."/>
            <person name="Skelton J."/>
            <person name="Stevens K."/>
            <person name="Whitehead S."/>
            <person name="Barrell B.G."/>
        </authorList>
    </citation>
    <scope>NUCLEOTIDE SEQUENCE [LARGE SCALE GENOMIC DNA]</scope>
    <source>
        <strain>CT18</strain>
    </source>
</reference>
<reference key="2">
    <citation type="journal article" date="2003" name="J. Bacteriol.">
        <title>Comparative genomics of Salmonella enterica serovar Typhi strains Ty2 and CT18.</title>
        <authorList>
            <person name="Deng W."/>
            <person name="Liou S.-R."/>
            <person name="Plunkett G. III"/>
            <person name="Mayhew G.F."/>
            <person name="Rose D.J."/>
            <person name="Burland V."/>
            <person name="Kodoyianni V."/>
            <person name="Schwartz D.C."/>
            <person name="Blattner F.R."/>
        </authorList>
    </citation>
    <scope>NUCLEOTIDE SEQUENCE [LARGE SCALE GENOMIC DNA]</scope>
    <source>
        <strain>ATCC 700931 / Ty2</strain>
    </source>
</reference>
<protein>
    <recommendedName>
        <fullName evidence="1">Glutamate 5-kinase</fullName>
        <ecNumber evidence="1">2.7.2.11</ecNumber>
    </recommendedName>
    <alternativeName>
        <fullName evidence="1">Gamma-glutamyl kinase</fullName>
        <shortName evidence="1">GK</shortName>
    </alternativeName>
</protein>
<accession>P65793</accession>
<accession>Q8XF21</accession>
<name>PROB_SALTI</name>
<comment type="function">
    <text evidence="1">Catalyzes the transfer of a phosphate group to glutamate to form L-glutamate 5-phosphate.</text>
</comment>
<comment type="catalytic activity">
    <reaction evidence="1">
        <text>L-glutamate + ATP = L-glutamyl 5-phosphate + ADP</text>
        <dbReference type="Rhea" id="RHEA:14877"/>
        <dbReference type="ChEBI" id="CHEBI:29985"/>
        <dbReference type="ChEBI" id="CHEBI:30616"/>
        <dbReference type="ChEBI" id="CHEBI:58274"/>
        <dbReference type="ChEBI" id="CHEBI:456216"/>
        <dbReference type="EC" id="2.7.2.11"/>
    </reaction>
</comment>
<comment type="pathway">
    <text evidence="1">Amino-acid biosynthesis; L-proline biosynthesis; L-glutamate 5-semialdehyde from L-glutamate: step 1/2.</text>
</comment>
<comment type="subcellular location">
    <subcellularLocation>
        <location evidence="1">Cytoplasm</location>
    </subcellularLocation>
</comment>
<comment type="similarity">
    <text evidence="1">Belongs to the glutamate 5-kinase family.</text>
</comment>
<evidence type="ECO:0000255" key="1">
    <source>
        <dbReference type="HAMAP-Rule" id="MF_00456"/>
    </source>
</evidence>
<sequence length="367" mass="39141">MSDSQTLVVKLGTSVLTGGSRRLNRAHIVELVRQCAQLHAAGHRIVIVTSGAIAAGREHLGYPELPATIASKQLLAAVGQSRLIQLWEQLFSIYGIHIGQMLLTRADMEDRERFLNARDTLRALLDNHIVPVINENDAVATAEIKVGDNDNLSALAAILAGADKLLLLTDQQGLFTADPRSNPQAELIKDVYGVDDALRSIAGDSVSGLGTGGMSTKLQAADVACRAGIDTIIASGSKPGVIGDVMEGISVGTRFHAQASPLENRKRWIFGAPPAGEITVDEGATAAMLERGSSLLPKGIKSVTGNFSRGEVIRICNLQGRDIAHGVSRYNSDALRRIAGHHSQQIDAILGYEYGPVAVHRDDMITR</sequence>
<keyword id="KW-0028">Amino-acid biosynthesis</keyword>
<keyword id="KW-0067">ATP-binding</keyword>
<keyword id="KW-0963">Cytoplasm</keyword>
<keyword id="KW-0418">Kinase</keyword>
<keyword id="KW-0547">Nucleotide-binding</keyword>
<keyword id="KW-0641">Proline biosynthesis</keyword>
<keyword id="KW-0808">Transferase</keyword>
<gene>
    <name evidence="1" type="primary">proB</name>
    <name type="ordered locus">STY0366</name>
    <name type="ordered locus">t2529</name>
</gene>
<feature type="chain" id="PRO_0000109722" description="Glutamate 5-kinase">
    <location>
        <begin position="1"/>
        <end position="367"/>
    </location>
</feature>
<feature type="domain" description="PUA" evidence="1">
    <location>
        <begin position="275"/>
        <end position="353"/>
    </location>
</feature>
<feature type="binding site" evidence="1">
    <location>
        <position position="10"/>
    </location>
    <ligand>
        <name>ATP</name>
        <dbReference type="ChEBI" id="CHEBI:30616"/>
    </ligand>
</feature>
<feature type="binding site" evidence="1">
    <location>
        <position position="50"/>
    </location>
    <ligand>
        <name>substrate</name>
    </ligand>
</feature>
<feature type="binding site" evidence="1">
    <location>
        <position position="137"/>
    </location>
    <ligand>
        <name>substrate</name>
    </ligand>
</feature>
<feature type="binding site" evidence="1">
    <location>
        <position position="149"/>
    </location>
    <ligand>
        <name>substrate</name>
    </ligand>
</feature>
<feature type="binding site" evidence="1">
    <location>
        <begin position="169"/>
        <end position="170"/>
    </location>
    <ligand>
        <name>ATP</name>
        <dbReference type="ChEBI" id="CHEBI:30616"/>
    </ligand>
</feature>
<feature type="binding site" evidence="1">
    <location>
        <begin position="211"/>
        <end position="217"/>
    </location>
    <ligand>
        <name>ATP</name>
        <dbReference type="ChEBI" id="CHEBI:30616"/>
    </ligand>
</feature>
<dbReference type="EC" id="2.7.2.11" evidence="1"/>
<dbReference type="EMBL" id="AL513382">
    <property type="protein sequence ID" value="CAD08791.1"/>
    <property type="molecule type" value="Genomic_DNA"/>
</dbReference>
<dbReference type="EMBL" id="AE014613">
    <property type="protein sequence ID" value="AAO70113.1"/>
    <property type="molecule type" value="Genomic_DNA"/>
</dbReference>
<dbReference type="RefSeq" id="NP_454933.1">
    <property type="nucleotide sequence ID" value="NC_003198.1"/>
</dbReference>
<dbReference type="RefSeq" id="WP_001285275.1">
    <property type="nucleotide sequence ID" value="NZ_WSUR01000017.1"/>
</dbReference>
<dbReference type="SMR" id="P65793"/>
<dbReference type="STRING" id="220341.gene:17584395"/>
<dbReference type="KEGG" id="stt:t2529"/>
<dbReference type="KEGG" id="sty:STY0366"/>
<dbReference type="PATRIC" id="fig|220341.7.peg.361"/>
<dbReference type="eggNOG" id="COG0263">
    <property type="taxonomic scope" value="Bacteria"/>
</dbReference>
<dbReference type="HOGENOM" id="CLU_025400_2_0_6"/>
<dbReference type="OMA" id="SVTELMF"/>
<dbReference type="OrthoDB" id="9804434at2"/>
<dbReference type="UniPathway" id="UPA00098">
    <property type="reaction ID" value="UER00359"/>
</dbReference>
<dbReference type="Proteomes" id="UP000000541">
    <property type="component" value="Chromosome"/>
</dbReference>
<dbReference type="Proteomes" id="UP000002670">
    <property type="component" value="Chromosome"/>
</dbReference>
<dbReference type="GO" id="GO:0005829">
    <property type="term" value="C:cytosol"/>
    <property type="evidence" value="ECO:0007669"/>
    <property type="project" value="TreeGrafter"/>
</dbReference>
<dbReference type="GO" id="GO:0005524">
    <property type="term" value="F:ATP binding"/>
    <property type="evidence" value="ECO:0007669"/>
    <property type="project" value="UniProtKB-KW"/>
</dbReference>
<dbReference type="GO" id="GO:0004349">
    <property type="term" value="F:glutamate 5-kinase activity"/>
    <property type="evidence" value="ECO:0007669"/>
    <property type="project" value="UniProtKB-UniRule"/>
</dbReference>
<dbReference type="GO" id="GO:0003723">
    <property type="term" value="F:RNA binding"/>
    <property type="evidence" value="ECO:0007669"/>
    <property type="project" value="InterPro"/>
</dbReference>
<dbReference type="GO" id="GO:0055129">
    <property type="term" value="P:L-proline biosynthetic process"/>
    <property type="evidence" value="ECO:0007669"/>
    <property type="project" value="UniProtKB-UniRule"/>
</dbReference>
<dbReference type="CDD" id="cd04242">
    <property type="entry name" value="AAK_G5K_ProB"/>
    <property type="match status" value="1"/>
</dbReference>
<dbReference type="CDD" id="cd21157">
    <property type="entry name" value="PUA_G5K"/>
    <property type="match status" value="1"/>
</dbReference>
<dbReference type="FunFam" id="2.30.130.10:FF:000003">
    <property type="entry name" value="Glutamate 5-kinase"/>
    <property type="match status" value="1"/>
</dbReference>
<dbReference type="FunFam" id="3.40.1160.10:FF:000006">
    <property type="entry name" value="Glutamate 5-kinase"/>
    <property type="match status" value="1"/>
</dbReference>
<dbReference type="Gene3D" id="3.40.1160.10">
    <property type="entry name" value="Acetylglutamate kinase-like"/>
    <property type="match status" value="2"/>
</dbReference>
<dbReference type="Gene3D" id="2.30.130.10">
    <property type="entry name" value="PUA domain"/>
    <property type="match status" value="1"/>
</dbReference>
<dbReference type="HAMAP" id="MF_00456">
    <property type="entry name" value="ProB"/>
    <property type="match status" value="1"/>
</dbReference>
<dbReference type="InterPro" id="IPR036393">
    <property type="entry name" value="AceGlu_kinase-like_sf"/>
</dbReference>
<dbReference type="InterPro" id="IPR001048">
    <property type="entry name" value="Asp/Glu/Uridylate_kinase"/>
</dbReference>
<dbReference type="InterPro" id="IPR041739">
    <property type="entry name" value="G5K_ProB"/>
</dbReference>
<dbReference type="InterPro" id="IPR001057">
    <property type="entry name" value="Glu/AcGlu_kinase"/>
</dbReference>
<dbReference type="InterPro" id="IPR011529">
    <property type="entry name" value="Glu_5kinase"/>
</dbReference>
<dbReference type="InterPro" id="IPR005715">
    <property type="entry name" value="Glu_5kinase/COase_Synthase"/>
</dbReference>
<dbReference type="InterPro" id="IPR019797">
    <property type="entry name" value="Glutamate_5-kinase_CS"/>
</dbReference>
<dbReference type="InterPro" id="IPR002478">
    <property type="entry name" value="PUA"/>
</dbReference>
<dbReference type="InterPro" id="IPR015947">
    <property type="entry name" value="PUA-like_sf"/>
</dbReference>
<dbReference type="InterPro" id="IPR036974">
    <property type="entry name" value="PUA_sf"/>
</dbReference>
<dbReference type="NCBIfam" id="TIGR01027">
    <property type="entry name" value="proB"/>
    <property type="match status" value="1"/>
</dbReference>
<dbReference type="PANTHER" id="PTHR43654">
    <property type="entry name" value="GLUTAMATE 5-KINASE"/>
    <property type="match status" value="1"/>
</dbReference>
<dbReference type="PANTHER" id="PTHR43654:SF1">
    <property type="entry name" value="ISOPENTENYL PHOSPHATE KINASE"/>
    <property type="match status" value="1"/>
</dbReference>
<dbReference type="Pfam" id="PF00696">
    <property type="entry name" value="AA_kinase"/>
    <property type="match status" value="1"/>
</dbReference>
<dbReference type="Pfam" id="PF01472">
    <property type="entry name" value="PUA"/>
    <property type="match status" value="1"/>
</dbReference>
<dbReference type="PIRSF" id="PIRSF000729">
    <property type="entry name" value="GK"/>
    <property type="match status" value="1"/>
</dbReference>
<dbReference type="PRINTS" id="PR00474">
    <property type="entry name" value="GLU5KINASE"/>
</dbReference>
<dbReference type="SMART" id="SM00359">
    <property type="entry name" value="PUA"/>
    <property type="match status" value="1"/>
</dbReference>
<dbReference type="SUPFAM" id="SSF53633">
    <property type="entry name" value="Carbamate kinase-like"/>
    <property type="match status" value="1"/>
</dbReference>
<dbReference type="SUPFAM" id="SSF88697">
    <property type="entry name" value="PUA domain-like"/>
    <property type="match status" value="1"/>
</dbReference>
<dbReference type="PROSITE" id="PS00902">
    <property type="entry name" value="GLUTAMATE_5_KINASE"/>
    <property type="match status" value="1"/>
</dbReference>
<dbReference type="PROSITE" id="PS50890">
    <property type="entry name" value="PUA"/>
    <property type="match status" value="1"/>
</dbReference>
<proteinExistence type="inferred from homology"/>